<organism>
    <name type="scientific">Thermotoga maritima (strain ATCC 43589 / DSM 3109 / JCM 10099 / NBRC 100826 / MSB8)</name>
    <dbReference type="NCBI Taxonomy" id="243274"/>
    <lineage>
        <taxon>Bacteria</taxon>
        <taxon>Thermotogati</taxon>
        <taxon>Thermotogota</taxon>
        <taxon>Thermotogae</taxon>
        <taxon>Thermotogales</taxon>
        <taxon>Thermotogaceae</taxon>
        <taxon>Thermotoga</taxon>
    </lineage>
</organism>
<dbReference type="EC" id="3.1.21.7" evidence="1"/>
<dbReference type="EMBL" id="AE000512">
    <property type="protein sequence ID" value="AAD36927.1"/>
    <property type="molecule type" value="Genomic_DNA"/>
</dbReference>
<dbReference type="PIR" id="B72202">
    <property type="entry name" value="B72202"/>
</dbReference>
<dbReference type="RefSeq" id="NP_229661.1">
    <property type="nucleotide sequence ID" value="NC_000853.1"/>
</dbReference>
<dbReference type="RefSeq" id="WP_004082416.1">
    <property type="nucleotide sequence ID" value="NC_000853.1"/>
</dbReference>
<dbReference type="PDB" id="2W35">
    <property type="method" value="X-ray"/>
    <property type="resolution" value="2.15 A"/>
    <property type="chains" value="A/B=1-225"/>
</dbReference>
<dbReference type="PDB" id="2W36">
    <property type="method" value="X-ray"/>
    <property type="resolution" value="2.10 A"/>
    <property type="chains" value="A/B=1-225"/>
</dbReference>
<dbReference type="PDB" id="3HD0">
    <property type="method" value="X-ray"/>
    <property type="resolution" value="2.70 A"/>
    <property type="chains" value="A/B/D=1-222"/>
</dbReference>
<dbReference type="PDB" id="4B20">
    <property type="method" value="X-ray"/>
    <property type="resolution" value="2.75 A"/>
    <property type="chains" value="A/B=1-225"/>
</dbReference>
<dbReference type="PDB" id="6OZF">
    <property type="method" value="X-ray"/>
    <property type="resolution" value="1.80 A"/>
    <property type="chains" value="A/B=1-225"/>
</dbReference>
<dbReference type="PDB" id="6OZG">
    <property type="method" value="X-ray"/>
    <property type="resolution" value="1.93 A"/>
    <property type="chains" value="A/B=1-224"/>
</dbReference>
<dbReference type="PDBsum" id="2W35"/>
<dbReference type="PDBsum" id="2W36"/>
<dbReference type="PDBsum" id="3HD0"/>
<dbReference type="PDBsum" id="4B20"/>
<dbReference type="PDBsum" id="6OZF"/>
<dbReference type="PDBsum" id="6OZG"/>
<dbReference type="SMR" id="Q9X2H9"/>
<dbReference type="DIP" id="DIP-48482N"/>
<dbReference type="FunCoup" id="Q9X2H9">
    <property type="interactions" value="123"/>
</dbReference>
<dbReference type="STRING" id="243274.TM_1865"/>
<dbReference type="PaxDb" id="243274-THEMA_04845"/>
<dbReference type="EnsemblBacteria" id="AAD36927">
    <property type="protein sequence ID" value="AAD36927"/>
    <property type="gene ID" value="TM_1865"/>
</dbReference>
<dbReference type="KEGG" id="tma:TM1865"/>
<dbReference type="KEGG" id="tmi:THEMA_04845"/>
<dbReference type="KEGG" id="tmm:Tmari_1880"/>
<dbReference type="KEGG" id="tmw:THMA_1915"/>
<dbReference type="eggNOG" id="COG1515">
    <property type="taxonomic scope" value="Bacteria"/>
</dbReference>
<dbReference type="InParanoid" id="Q9X2H9"/>
<dbReference type="OrthoDB" id="9790916at2"/>
<dbReference type="BRENDA" id="3.1.21.7">
    <property type="organism ID" value="6331"/>
</dbReference>
<dbReference type="EvolutionaryTrace" id="Q9X2H9"/>
<dbReference type="Proteomes" id="UP000008183">
    <property type="component" value="Chromosome"/>
</dbReference>
<dbReference type="GO" id="GO:0005737">
    <property type="term" value="C:cytoplasm"/>
    <property type="evidence" value="ECO:0007669"/>
    <property type="project" value="UniProtKB-SubCell"/>
</dbReference>
<dbReference type="GO" id="GO:0043737">
    <property type="term" value="F:deoxyribonuclease V activity"/>
    <property type="evidence" value="ECO:0000318"/>
    <property type="project" value="GO_Central"/>
</dbReference>
<dbReference type="GO" id="GO:0000287">
    <property type="term" value="F:magnesium ion binding"/>
    <property type="evidence" value="ECO:0007669"/>
    <property type="project" value="UniProtKB-UniRule"/>
</dbReference>
<dbReference type="GO" id="GO:0016891">
    <property type="term" value="F:RNA endonuclease activity, producing 5'-phosphomonoesters"/>
    <property type="evidence" value="ECO:0000318"/>
    <property type="project" value="GO_Central"/>
</dbReference>
<dbReference type="GO" id="GO:0003727">
    <property type="term" value="F:single-stranded RNA binding"/>
    <property type="evidence" value="ECO:0000318"/>
    <property type="project" value="GO_Central"/>
</dbReference>
<dbReference type="GO" id="GO:0006281">
    <property type="term" value="P:DNA repair"/>
    <property type="evidence" value="ECO:0007669"/>
    <property type="project" value="UniProtKB-UniRule"/>
</dbReference>
<dbReference type="CDD" id="cd06559">
    <property type="entry name" value="Endonuclease_V"/>
    <property type="match status" value="1"/>
</dbReference>
<dbReference type="FunFam" id="3.30.2170.10:FF:000008">
    <property type="entry name" value="Endonuclease V"/>
    <property type="match status" value="1"/>
</dbReference>
<dbReference type="Gene3D" id="3.30.2170.10">
    <property type="entry name" value="archaeoglobus fulgidus dsm 4304 superfamily"/>
    <property type="match status" value="1"/>
</dbReference>
<dbReference type="HAMAP" id="MF_00801">
    <property type="entry name" value="Endonuclease_5"/>
    <property type="match status" value="1"/>
</dbReference>
<dbReference type="InterPro" id="IPR007581">
    <property type="entry name" value="Endonuclease-V"/>
</dbReference>
<dbReference type="InterPro" id="IPR053396">
    <property type="entry name" value="Endonuclease_V-like"/>
</dbReference>
<dbReference type="NCBIfam" id="NF041102">
    <property type="entry name" value="endonuc_V_Ttgales"/>
    <property type="match status" value="1"/>
</dbReference>
<dbReference type="PANTHER" id="PTHR28511">
    <property type="entry name" value="ENDONUCLEASE V"/>
    <property type="match status" value="1"/>
</dbReference>
<dbReference type="PANTHER" id="PTHR28511:SF1">
    <property type="entry name" value="ENDONUCLEASE V"/>
    <property type="match status" value="1"/>
</dbReference>
<dbReference type="Pfam" id="PF04493">
    <property type="entry name" value="Endonuclease_5"/>
    <property type="match status" value="1"/>
</dbReference>
<name>NFI_THEMA</name>
<accession>Q9X2H9</accession>
<reference key="1">
    <citation type="journal article" date="1999" name="Nature">
        <title>Evidence for lateral gene transfer between Archaea and Bacteria from genome sequence of Thermotoga maritima.</title>
        <authorList>
            <person name="Nelson K.E."/>
            <person name="Clayton R.A."/>
            <person name="Gill S.R."/>
            <person name="Gwinn M.L."/>
            <person name="Dodson R.J."/>
            <person name="Haft D.H."/>
            <person name="Hickey E.K."/>
            <person name="Peterson J.D."/>
            <person name="Nelson W.C."/>
            <person name="Ketchum K.A."/>
            <person name="McDonald L.A."/>
            <person name="Utterback T.R."/>
            <person name="Malek J.A."/>
            <person name="Linher K.D."/>
            <person name="Garrett M.M."/>
            <person name="Stewart A.M."/>
            <person name="Cotton M.D."/>
            <person name="Pratt M.S."/>
            <person name="Phillips C.A."/>
            <person name="Richardson D.L."/>
            <person name="Heidelberg J.F."/>
            <person name="Sutton G.G."/>
            <person name="Fleischmann R.D."/>
            <person name="Eisen J.A."/>
            <person name="White O."/>
            <person name="Salzberg S.L."/>
            <person name="Smith H.O."/>
            <person name="Venter J.C."/>
            <person name="Fraser C.M."/>
        </authorList>
    </citation>
    <scope>NUCLEOTIDE SEQUENCE [LARGE SCALE GENOMIC DNA]</scope>
    <source>
        <strain>ATCC 43589 / DSM 3109 / JCM 10099 / NBRC 100826 / MSB8</strain>
    </source>
</reference>
<reference key="2">
    <citation type="journal article" date="2002" name="Biochemistry">
        <title>Mutational analysis of endonuclease V from Thermotoga maritima.</title>
        <authorList>
            <person name="Huang J."/>
            <person name="Lu J."/>
            <person name="Barany F."/>
            <person name="Cao W."/>
        </authorList>
    </citation>
    <scope>CATALYTIC ACTIVITY</scope>
    <scope>FUNCTION</scope>
    <scope>COFACTOR</scope>
    <scope>MUTAGENESIS OF ASP-43; TYR-80; ARG-88; GLU-89; ASP-110; HIS-116; HIS-125 AND LYS-139</scope>
</reference>
<reference key="3">
    <citation type="journal article" date="2009" name="Nat. Struct. Mol. Biol.">
        <title>Structures of endonuclease V with DNA reveal initiation of deaminated adenine repair.</title>
        <authorList>
            <person name="Dalhus B."/>
            <person name="Arvai A.S."/>
            <person name="Rosnes I."/>
            <person name="Olsen O.E."/>
            <person name="Backe P.H."/>
            <person name="Alseth I."/>
            <person name="Gao H."/>
            <person name="Cao W."/>
            <person name="Tainer J.A."/>
            <person name="Bjoras M."/>
        </authorList>
    </citation>
    <scope>X-RAY CRYSTALLOGRAPHY (2.10 ANGSTROMS) IN COMPLEXES WITH HYPOXANTHINE LESION SUBSTRATE; DNA AND MAGNESIUM IONS</scope>
</reference>
<reference key="4">
    <citation type="submission" date="2009-05" db="PDB data bank">
        <title>Crystal structure of Tm1865, an Endonuclease V from Thermotoga maritima.</title>
        <authorList>
            <person name="Utepbergenov D."/>
            <person name="Cooper D.R."/>
            <person name="Derewenda U."/>
            <person name="Derewenda Z.S."/>
        </authorList>
    </citation>
    <scope>X-RAY CRYSTALLOGRAPHY (2.70 ANGSTROMS) OF 1-222</scope>
</reference>
<gene>
    <name evidence="1" type="primary">nfi</name>
    <name type="ordered locus">TM_1865</name>
</gene>
<sequence length="225" mass="25598">MDYRQLHRWDLPPEEAIKVQNELRKKIKLTPYEGEPEYVAGVDLSFPGKEEGLAVIVVLEYPSFKILEVVSERGEITFPYIPGLLAFREGPLFLKAWEKLRTKPDVVVFDGQGLAHPRKLGIASHMGLFIEIPTIGVAKSRLYGTFKMPEDKRCSWSYLYDGEEIIGCVIRTKEGSAPIFVSPGHLMDVESSKRLIKAFTLPGRRIPEPTRLAHIYTQRLKKGLF</sequence>
<proteinExistence type="evidence at protein level"/>
<protein>
    <recommendedName>
        <fullName evidence="1">Endonuclease V</fullName>
        <ecNumber evidence="1">3.1.21.7</ecNumber>
    </recommendedName>
    <alternativeName>
        <fullName evidence="1">Deoxyinosine 3'endonuclease</fullName>
    </alternativeName>
    <alternativeName>
        <fullName evidence="1">Deoxyribonuclease V</fullName>
        <shortName evidence="1">DNase V</shortName>
    </alternativeName>
</protein>
<evidence type="ECO:0000255" key="1">
    <source>
        <dbReference type="HAMAP-Rule" id="MF_00801"/>
    </source>
</evidence>
<evidence type="ECO:0000269" key="2">
    <source>
    </source>
</evidence>
<evidence type="ECO:0007829" key="3">
    <source>
        <dbReference type="PDB" id="2W36"/>
    </source>
</evidence>
<evidence type="ECO:0007829" key="4">
    <source>
        <dbReference type="PDB" id="3HD0"/>
    </source>
</evidence>
<evidence type="ECO:0007829" key="5">
    <source>
        <dbReference type="PDB" id="6OZF"/>
    </source>
</evidence>
<keyword id="KW-0002">3D-structure</keyword>
<keyword id="KW-0963">Cytoplasm</keyword>
<keyword id="KW-0227">DNA damage</keyword>
<keyword id="KW-0234">DNA repair</keyword>
<keyword id="KW-0255">Endonuclease</keyword>
<keyword id="KW-0378">Hydrolase</keyword>
<keyword id="KW-0460">Magnesium</keyword>
<keyword id="KW-0479">Metal-binding</keyword>
<keyword id="KW-0540">Nuclease</keyword>
<keyword id="KW-1185">Reference proteome</keyword>
<comment type="function">
    <text evidence="1 2">DNA repair enzyme involved in the repair of deaminated bases. Selectively cleaves double-stranded DNA at the second phosphodiester bond 3' to a deoxyinosine leaving behind the intact lesion on the nicked DNA. In vitro, can also cleave single-stranded substrates with inosine, double-stranded DNA with apurinic sites, or DNA sites with uracil or a mismatched base. When present in molar excess, two protein molecules can bind to the same DNA substrate and effect cleavage of both strands (in vitro).</text>
</comment>
<comment type="catalytic activity">
    <reaction evidence="1 2">
        <text>Endonucleolytic cleavage at apurinic or apyrimidinic sites to products with a 5'-phosphate.</text>
        <dbReference type="EC" id="3.1.21.7"/>
    </reaction>
</comment>
<comment type="cofactor">
    <cofactor evidence="1 2">
        <name>Mg(2+)</name>
        <dbReference type="ChEBI" id="CHEBI:18420"/>
    </cofactor>
</comment>
<comment type="subcellular location">
    <subcellularLocation>
        <location evidence="1">Cytoplasm</location>
    </subcellularLocation>
</comment>
<comment type="similarity">
    <text evidence="1">Belongs to the endonuclease V family.</text>
</comment>
<feature type="chain" id="PRO_0000159674" description="Endonuclease V">
    <location>
        <begin position="1"/>
        <end position="225"/>
    </location>
</feature>
<feature type="region of interest" description="Interaction with target DNA">
    <location>
        <begin position="139"/>
        <end position="141"/>
    </location>
</feature>
<feature type="region of interest" description="Interaction with target DNA">
    <location>
        <begin position="214"/>
        <end position="221"/>
    </location>
</feature>
<feature type="binding site">
    <location>
        <position position="43"/>
    </location>
    <ligand>
        <name>Mg(2+)</name>
        <dbReference type="ChEBI" id="CHEBI:18420"/>
    </ligand>
</feature>
<feature type="binding site">
    <location>
        <position position="110"/>
    </location>
    <ligand>
        <name>Mg(2+)</name>
        <dbReference type="ChEBI" id="CHEBI:18420"/>
    </ligand>
</feature>
<feature type="site" description="Interaction with target DNA">
    <location>
        <position position="80"/>
    </location>
</feature>
<feature type="mutagenesis site" description="Complete loss of enzyme activity." evidence="2">
    <original>D</original>
    <variation>A</variation>
    <location>
        <position position="43"/>
    </location>
</feature>
<feature type="mutagenesis site" description="Reduced affinity for DNA. No effect on cleavage of DNA containing inosine. Abolishes cleavage at apurinic sites." evidence="2">
    <original>Y</original>
    <variation>A</variation>
    <location>
        <position position="80"/>
    </location>
</feature>
<feature type="mutagenesis site" description="Reduced affinity for DNA. No effect on cleavage of DNA containing inosine. Abolishes cleavage at apurinic sites." evidence="2">
    <original>R</original>
    <variation>A</variation>
    <location>
        <position position="88"/>
    </location>
</feature>
<feature type="mutagenesis site" description="Strongly reduced cleavage of DNA containing inosine." evidence="2">
    <original>E</original>
    <variation>A</variation>
    <location>
        <position position="89"/>
    </location>
</feature>
<feature type="mutagenesis site" description="No effect on cleavage of DNA containing inosine.">
    <original>D</original>
    <variation>A</variation>
    <location>
        <position position="105"/>
    </location>
</feature>
<feature type="mutagenesis site" description="Complete loss of enzyme activity." evidence="2">
    <original>D</original>
    <variation>A</variation>
    <location>
        <position position="110"/>
    </location>
</feature>
<feature type="mutagenesis site" description="Reduced affinity for DNA. No effect on cleavage of DNA containing inosine. Abolishes cleavage at apurinic sites." evidence="2">
    <original>H</original>
    <variation>A</variation>
    <location>
        <position position="116"/>
    </location>
</feature>
<feature type="mutagenesis site" description="No effect on cleavage of DNA containing inosine." evidence="2">
    <original>H</original>
    <variation>A</variation>
    <location>
        <position position="125"/>
    </location>
</feature>
<feature type="mutagenesis site" description="No effect on DNA binding. No effect on cleavage of DNA containing inosine. Strongly reduced cleavage at apurinic sites." evidence="2">
    <original>K</original>
    <variation>A</variation>
    <location>
        <position position="139"/>
    </location>
</feature>
<feature type="strand" evidence="5">
    <location>
        <begin position="3"/>
        <end position="5"/>
    </location>
</feature>
<feature type="helix" evidence="5">
    <location>
        <begin position="13"/>
        <end position="23"/>
    </location>
</feature>
<feature type="helix" evidence="5">
    <location>
        <begin position="24"/>
        <end position="26"/>
    </location>
</feature>
<feature type="strand" evidence="5">
    <location>
        <begin position="37"/>
        <end position="48"/>
    </location>
</feature>
<feature type="strand" evidence="5">
    <location>
        <begin position="51"/>
        <end position="60"/>
    </location>
</feature>
<feature type="turn" evidence="5">
    <location>
        <begin position="61"/>
        <end position="63"/>
    </location>
</feature>
<feature type="strand" evidence="5">
    <location>
        <begin position="66"/>
        <end position="75"/>
    </location>
</feature>
<feature type="helix" evidence="5">
    <location>
        <begin position="85"/>
        <end position="99"/>
    </location>
</feature>
<feature type="strand" evidence="5">
    <location>
        <begin position="105"/>
        <end position="111"/>
    </location>
</feature>
<feature type="strand" evidence="5">
    <location>
        <begin position="113"/>
        <end position="116"/>
    </location>
</feature>
<feature type="helix" evidence="5">
    <location>
        <begin position="122"/>
        <end position="130"/>
    </location>
</feature>
<feature type="strand" evidence="5">
    <location>
        <begin position="134"/>
        <end position="140"/>
    </location>
</feature>
<feature type="strand" evidence="4">
    <location>
        <begin position="143"/>
        <end position="145"/>
    </location>
</feature>
<feature type="strand" evidence="3">
    <location>
        <begin position="151"/>
        <end position="154"/>
    </location>
</feature>
<feature type="strand" evidence="5">
    <location>
        <begin position="156"/>
        <end position="161"/>
    </location>
</feature>
<feature type="strand" evidence="5">
    <location>
        <begin position="164"/>
        <end position="170"/>
    </location>
</feature>
<feature type="strand" evidence="5">
    <location>
        <begin position="179"/>
        <end position="183"/>
    </location>
</feature>
<feature type="helix" evidence="5">
    <location>
        <begin position="189"/>
        <end position="199"/>
    </location>
</feature>
<feature type="helix" evidence="5">
    <location>
        <begin position="208"/>
        <end position="220"/>
    </location>
</feature>